<comment type="function">
    <text evidence="1">Part of the RFC clamp loader complex which loads the PCNA sliding clamp onto DNA.</text>
</comment>
<comment type="subunit">
    <text evidence="1">Heteromultimer composed of small subunits (RfcS) and large subunits (RfcL).</text>
</comment>
<comment type="similarity">
    <text evidence="1">Belongs to the activator 1 small subunits family. RfcS subfamily.</text>
</comment>
<evidence type="ECO:0000255" key="1">
    <source>
        <dbReference type="HAMAP-Rule" id="MF_01509"/>
    </source>
</evidence>
<keyword id="KW-0067">ATP-binding</keyword>
<keyword id="KW-0235">DNA replication</keyword>
<keyword id="KW-0547">Nucleotide-binding</keyword>
<proteinExistence type="inferred from homology"/>
<name>RFCS_METMJ</name>
<protein>
    <recommendedName>
        <fullName evidence="1">Replication factor C small subunit</fullName>
        <shortName evidence="1">RFC small subunit</shortName>
    </recommendedName>
    <alternativeName>
        <fullName evidence="1">Clamp loader small subunit</fullName>
    </alternativeName>
</protein>
<dbReference type="EMBL" id="CP000562">
    <property type="protein sequence ID" value="ABN57179.1"/>
    <property type="molecule type" value="Genomic_DNA"/>
</dbReference>
<dbReference type="RefSeq" id="WP_011844090.1">
    <property type="nucleotide sequence ID" value="NC_009051.1"/>
</dbReference>
<dbReference type="SMR" id="A3CUX9"/>
<dbReference type="STRING" id="368407.Memar_1248"/>
<dbReference type="GeneID" id="4846669"/>
<dbReference type="KEGG" id="mem:Memar_1248"/>
<dbReference type="eggNOG" id="arCOG00469">
    <property type="taxonomic scope" value="Archaea"/>
</dbReference>
<dbReference type="HOGENOM" id="CLU_042324_2_1_2"/>
<dbReference type="OrthoDB" id="7928at2157"/>
<dbReference type="Proteomes" id="UP000002146">
    <property type="component" value="Chromosome"/>
</dbReference>
<dbReference type="GO" id="GO:0005663">
    <property type="term" value="C:DNA replication factor C complex"/>
    <property type="evidence" value="ECO:0007669"/>
    <property type="project" value="InterPro"/>
</dbReference>
<dbReference type="GO" id="GO:0005524">
    <property type="term" value="F:ATP binding"/>
    <property type="evidence" value="ECO:0007669"/>
    <property type="project" value="UniProtKB-UniRule"/>
</dbReference>
<dbReference type="GO" id="GO:0016887">
    <property type="term" value="F:ATP hydrolysis activity"/>
    <property type="evidence" value="ECO:0007669"/>
    <property type="project" value="InterPro"/>
</dbReference>
<dbReference type="GO" id="GO:0003677">
    <property type="term" value="F:DNA binding"/>
    <property type="evidence" value="ECO:0007669"/>
    <property type="project" value="InterPro"/>
</dbReference>
<dbReference type="GO" id="GO:0003689">
    <property type="term" value="F:DNA clamp loader activity"/>
    <property type="evidence" value="ECO:0007669"/>
    <property type="project" value="UniProtKB-UniRule"/>
</dbReference>
<dbReference type="GO" id="GO:0006281">
    <property type="term" value="P:DNA repair"/>
    <property type="evidence" value="ECO:0007669"/>
    <property type="project" value="TreeGrafter"/>
</dbReference>
<dbReference type="GO" id="GO:0006261">
    <property type="term" value="P:DNA-templated DNA replication"/>
    <property type="evidence" value="ECO:0007669"/>
    <property type="project" value="TreeGrafter"/>
</dbReference>
<dbReference type="CDD" id="cd00009">
    <property type="entry name" value="AAA"/>
    <property type="match status" value="1"/>
</dbReference>
<dbReference type="CDD" id="cd18140">
    <property type="entry name" value="HLD_clamp_RFC"/>
    <property type="match status" value="1"/>
</dbReference>
<dbReference type="FunFam" id="3.40.50.300:FF:000952">
    <property type="entry name" value="Replication factor C subunit 2"/>
    <property type="match status" value="1"/>
</dbReference>
<dbReference type="Gene3D" id="1.10.8.60">
    <property type="match status" value="1"/>
</dbReference>
<dbReference type="Gene3D" id="1.20.272.10">
    <property type="match status" value="1"/>
</dbReference>
<dbReference type="Gene3D" id="3.40.50.300">
    <property type="entry name" value="P-loop containing nucleotide triphosphate hydrolases"/>
    <property type="match status" value="1"/>
</dbReference>
<dbReference type="HAMAP" id="MF_01509">
    <property type="entry name" value="RfcS"/>
    <property type="match status" value="1"/>
</dbReference>
<dbReference type="InterPro" id="IPR003593">
    <property type="entry name" value="AAA+_ATPase"/>
</dbReference>
<dbReference type="InterPro" id="IPR003959">
    <property type="entry name" value="ATPase_AAA_core"/>
</dbReference>
<dbReference type="InterPro" id="IPR008921">
    <property type="entry name" value="DNA_pol3_clamp-load_cplx_C"/>
</dbReference>
<dbReference type="InterPro" id="IPR050238">
    <property type="entry name" value="DNA_Rep/Repair_Clamp_Loader"/>
</dbReference>
<dbReference type="InterPro" id="IPR027417">
    <property type="entry name" value="P-loop_NTPase"/>
</dbReference>
<dbReference type="InterPro" id="IPR023748">
    <property type="entry name" value="Rep_factor-C_ssu_arc"/>
</dbReference>
<dbReference type="InterPro" id="IPR013748">
    <property type="entry name" value="Rep_factorC_C"/>
</dbReference>
<dbReference type="InterPro" id="IPR047854">
    <property type="entry name" value="RFC_lid"/>
</dbReference>
<dbReference type="NCBIfam" id="NF001679">
    <property type="entry name" value="PRK00440.1"/>
    <property type="match status" value="1"/>
</dbReference>
<dbReference type="PANTHER" id="PTHR11669">
    <property type="entry name" value="REPLICATION FACTOR C / DNA POLYMERASE III GAMMA-TAU SUBUNIT"/>
    <property type="match status" value="1"/>
</dbReference>
<dbReference type="PANTHER" id="PTHR11669:SF20">
    <property type="entry name" value="REPLICATION FACTOR C SUBUNIT 4"/>
    <property type="match status" value="1"/>
</dbReference>
<dbReference type="Pfam" id="PF00004">
    <property type="entry name" value="AAA"/>
    <property type="match status" value="1"/>
</dbReference>
<dbReference type="Pfam" id="PF08542">
    <property type="entry name" value="Rep_fac_C"/>
    <property type="match status" value="1"/>
</dbReference>
<dbReference type="SMART" id="SM00382">
    <property type="entry name" value="AAA"/>
    <property type="match status" value="1"/>
</dbReference>
<dbReference type="SUPFAM" id="SSF52540">
    <property type="entry name" value="P-loop containing nucleoside triphosphate hydrolases"/>
    <property type="match status" value="1"/>
</dbReference>
<dbReference type="SUPFAM" id="SSF48019">
    <property type="entry name" value="post-AAA+ oligomerization domain-like"/>
    <property type="match status" value="1"/>
</dbReference>
<organism>
    <name type="scientific">Methanoculleus marisnigri (strain ATCC 35101 / DSM 1498 / JR1)</name>
    <dbReference type="NCBI Taxonomy" id="368407"/>
    <lineage>
        <taxon>Archaea</taxon>
        <taxon>Methanobacteriati</taxon>
        <taxon>Methanobacteriota</taxon>
        <taxon>Stenosarchaea group</taxon>
        <taxon>Methanomicrobia</taxon>
        <taxon>Methanomicrobiales</taxon>
        <taxon>Methanomicrobiaceae</taxon>
        <taxon>Methanoculleus</taxon>
    </lineage>
</organism>
<accession>A3CUX9</accession>
<reference key="1">
    <citation type="journal article" date="2009" name="Stand. Genomic Sci.">
        <title>Complete genome sequence of Methanoculleus marisnigri Romesser et al. 1981 type strain JR1.</title>
        <authorList>
            <person name="Anderson I.J."/>
            <person name="Sieprawska-Lupa M."/>
            <person name="Lapidus A."/>
            <person name="Nolan M."/>
            <person name="Copeland A."/>
            <person name="Glavina Del Rio T."/>
            <person name="Tice H."/>
            <person name="Dalin E."/>
            <person name="Barry K."/>
            <person name="Saunders E."/>
            <person name="Han C."/>
            <person name="Brettin T."/>
            <person name="Detter J.C."/>
            <person name="Bruce D."/>
            <person name="Mikhailova N."/>
            <person name="Pitluck S."/>
            <person name="Hauser L."/>
            <person name="Land M."/>
            <person name="Lucas S."/>
            <person name="Richardson P."/>
            <person name="Whitman W.B."/>
            <person name="Kyrpides N.C."/>
        </authorList>
    </citation>
    <scope>NUCLEOTIDE SEQUENCE [LARGE SCALE GENOMIC DNA]</scope>
    <source>
        <strain>ATCC 35101 / DSM 1498 / JR1</strain>
    </source>
</reference>
<feature type="chain" id="PRO_0000292188" description="Replication factor C small subunit">
    <location>
        <begin position="1"/>
        <end position="322"/>
    </location>
</feature>
<feature type="binding site" evidence="1">
    <location>
        <begin position="46"/>
        <end position="53"/>
    </location>
    <ligand>
        <name>ATP</name>
        <dbReference type="ChEBI" id="CHEBI:30616"/>
    </ligand>
</feature>
<sequence>MDGNHTIWIEKYRPRRLDEMVGQKDIVVRLQSYVKTGNLPHLLFTGSAGIGKTTAAVALAREFFGDSWQTNFREMNASDERGIDVVRNQIKEFARTSPLAGATFKILFLDEADALTTDAQAALRRTMETYARTCRFILSCNYSSKIIDPIQSRCAIYRFRPLDREAVIEETRRIAAAEGLTVTEGALDAIVYVASGDMRKAINALQGAAILRTDIDEETIFEITATARPEEIDELLDLSIGGRFDEAEQALLELTHVRGIAPNELINQCYRALVQRDIDRTLKVKLIDALGETDFRLSEGASSDIQMEALLARFVLAAEQHR</sequence>
<gene>
    <name evidence="1" type="primary">rfcS</name>
    <name type="ordered locus">Memar_1248</name>
</gene>